<name>CH10_RIPO1</name>
<proteinExistence type="inferred from homology"/>
<evidence type="ECO:0000255" key="1">
    <source>
        <dbReference type="HAMAP-Rule" id="MF_00580"/>
    </source>
</evidence>
<evidence type="ECO:0000305" key="2"/>
<protein>
    <recommendedName>
        <fullName evidence="1">Co-chaperonin GroES</fullName>
    </recommendedName>
    <alternativeName>
        <fullName evidence="1">10 kDa chaperonin</fullName>
    </alternativeName>
    <alternativeName>
        <fullName evidence="1">Chaperonin-10</fullName>
        <shortName evidence="1">Cpn10</shortName>
    </alternativeName>
</protein>
<feature type="chain" id="PRO_0000174877" description="Co-chaperonin GroES">
    <location>
        <begin position="1"/>
        <end position="103"/>
    </location>
</feature>
<feature type="sequence conflict" description="In Ref. 1; AAM20895." evidence="2" ref="1">
    <original>V</original>
    <variation>I</variation>
    <location>
        <position position="101"/>
    </location>
</feature>
<comment type="function">
    <text evidence="1">Together with the chaperonin GroEL, plays an essential role in assisting protein folding. The GroEL-GroES system forms a nano-cage that allows encapsulation of the non-native substrate proteins and provides a physical environment optimized to promote and accelerate protein folding. GroES binds to the apical surface of the GroEL ring, thereby capping the opening of the GroEL channel.</text>
</comment>
<comment type="subunit">
    <text evidence="1">Heptamer of 7 subunits arranged in a ring. Interacts with the chaperonin GroEL.</text>
</comment>
<comment type="subcellular location">
    <subcellularLocation>
        <location evidence="1">Cytoplasm</location>
    </subcellularLocation>
</comment>
<comment type="similarity">
    <text evidence="1">Belongs to the GroES chaperonin family.</text>
</comment>
<accession>Q8L373</accession>
<accession>B7JV02</accession>
<gene>
    <name evidence="1" type="primary">groES</name>
    <name evidence="1" type="synonym">groS</name>
    <name type="ordered locus">PCC8801_2855</name>
</gene>
<keyword id="KW-0143">Chaperone</keyword>
<keyword id="KW-0963">Cytoplasm</keyword>
<keyword id="KW-1185">Reference proteome</keyword>
<dbReference type="EMBL" id="AF373777">
    <property type="protein sequence ID" value="AAM20895.1"/>
    <property type="molecule type" value="Genomic_DNA"/>
</dbReference>
<dbReference type="EMBL" id="CP001287">
    <property type="protein sequence ID" value="ACK66854.1"/>
    <property type="molecule type" value="Genomic_DNA"/>
</dbReference>
<dbReference type="RefSeq" id="WP_012596120.1">
    <property type="nucleotide sequence ID" value="NC_011726.1"/>
</dbReference>
<dbReference type="SMR" id="Q8L373"/>
<dbReference type="STRING" id="41431.PCC8801_2855"/>
<dbReference type="KEGG" id="cyp:PCC8801_2855"/>
<dbReference type="eggNOG" id="COG0234">
    <property type="taxonomic scope" value="Bacteria"/>
</dbReference>
<dbReference type="HOGENOM" id="CLU_132825_2_1_3"/>
<dbReference type="OrthoDB" id="9806791at2"/>
<dbReference type="Proteomes" id="UP000008204">
    <property type="component" value="Chromosome"/>
</dbReference>
<dbReference type="GO" id="GO:0005737">
    <property type="term" value="C:cytoplasm"/>
    <property type="evidence" value="ECO:0007669"/>
    <property type="project" value="UniProtKB-SubCell"/>
</dbReference>
<dbReference type="GO" id="GO:0005524">
    <property type="term" value="F:ATP binding"/>
    <property type="evidence" value="ECO:0007669"/>
    <property type="project" value="InterPro"/>
</dbReference>
<dbReference type="GO" id="GO:0046872">
    <property type="term" value="F:metal ion binding"/>
    <property type="evidence" value="ECO:0007669"/>
    <property type="project" value="TreeGrafter"/>
</dbReference>
<dbReference type="GO" id="GO:0044183">
    <property type="term" value="F:protein folding chaperone"/>
    <property type="evidence" value="ECO:0007669"/>
    <property type="project" value="InterPro"/>
</dbReference>
<dbReference type="GO" id="GO:0051087">
    <property type="term" value="F:protein-folding chaperone binding"/>
    <property type="evidence" value="ECO:0007669"/>
    <property type="project" value="TreeGrafter"/>
</dbReference>
<dbReference type="GO" id="GO:0051082">
    <property type="term" value="F:unfolded protein binding"/>
    <property type="evidence" value="ECO:0007669"/>
    <property type="project" value="TreeGrafter"/>
</dbReference>
<dbReference type="GO" id="GO:0051085">
    <property type="term" value="P:chaperone cofactor-dependent protein refolding"/>
    <property type="evidence" value="ECO:0007669"/>
    <property type="project" value="TreeGrafter"/>
</dbReference>
<dbReference type="CDD" id="cd00320">
    <property type="entry name" value="cpn10"/>
    <property type="match status" value="1"/>
</dbReference>
<dbReference type="FunFam" id="2.30.33.40:FF:000001">
    <property type="entry name" value="10 kDa chaperonin"/>
    <property type="match status" value="1"/>
</dbReference>
<dbReference type="Gene3D" id="2.30.33.40">
    <property type="entry name" value="GroES chaperonin"/>
    <property type="match status" value="1"/>
</dbReference>
<dbReference type="HAMAP" id="MF_00580">
    <property type="entry name" value="CH10"/>
    <property type="match status" value="1"/>
</dbReference>
<dbReference type="InterPro" id="IPR020818">
    <property type="entry name" value="Chaperonin_GroES"/>
</dbReference>
<dbReference type="InterPro" id="IPR037124">
    <property type="entry name" value="Chaperonin_GroES_sf"/>
</dbReference>
<dbReference type="InterPro" id="IPR018369">
    <property type="entry name" value="Chaprnonin_Cpn10_CS"/>
</dbReference>
<dbReference type="InterPro" id="IPR011032">
    <property type="entry name" value="GroES-like_sf"/>
</dbReference>
<dbReference type="NCBIfam" id="NF001527">
    <property type="entry name" value="PRK00364.1-2"/>
    <property type="match status" value="1"/>
</dbReference>
<dbReference type="NCBIfam" id="NF001530">
    <property type="entry name" value="PRK00364.1-6"/>
    <property type="match status" value="1"/>
</dbReference>
<dbReference type="NCBIfam" id="NF001531">
    <property type="entry name" value="PRK00364.2-2"/>
    <property type="match status" value="1"/>
</dbReference>
<dbReference type="NCBIfam" id="NF001533">
    <property type="entry name" value="PRK00364.2-4"/>
    <property type="match status" value="1"/>
</dbReference>
<dbReference type="NCBIfam" id="NF001534">
    <property type="entry name" value="PRK00364.2-5"/>
    <property type="match status" value="1"/>
</dbReference>
<dbReference type="PANTHER" id="PTHR10772">
    <property type="entry name" value="10 KDA HEAT SHOCK PROTEIN"/>
    <property type="match status" value="1"/>
</dbReference>
<dbReference type="PANTHER" id="PTHR10772:SF58">
    <property type="entry name" value="CO-CHAPERONIN GROES"/>
    <property type="match status" value="1"/>
</dbReference>
<dbReference type="Pfam" id="PF00166">
    <property type="entry name" value="Cpn10"/>
    <property type="match status" value="1"/>
</dbReference>
<dbReference type="PRINTS" id="PR00297">
    <property type="entry name" value="CHAPERONIN10"/>
</dbReference>
<dbReference type="SMART" id="SM00883">
    <property type="entry name" value="Cpn10"/>
    <property type="match status" value="1"/>
</dbReference>
<dbReference type="SUPFAM" id="SSF50129">
    <property type="entry name" value="GroES-like"/>
    <property type="match status" value="1"/>
</dbReference>
<dbReference type="PROSITE" id="PS00681">
    <property type="entry name" value="CHAPERONINS_CPN10"/>
    <property type="match status" value="1"/>
</dbReference>
<sequence>MAAISINVSTVKPLGDRVFVKVSASEEKTAGGILLPDTAKEKPQIGEIVTVGPGKRNDDGSRSEPEVKVGDKVLYSKYAGTDIKLGGEDYVLLSEKDILAVVD</sequence>
<reference key="1">
    <citation type="submission" date="2001-04" db="EMBL/GenBank/DDBJ databases">
        <title>Chaperonin containing sequence in Synechococcus RF-1.</title>
        <authorList>
            <person name="Lin R.-F."/>
            <person name="Huang T.-C."/>
        </authorList>
    </citation>
    <scope>NUCLEOTIDE SEQUENCE [GENOMIC DNA]</scope>
</reference>
<reference key="2">
    <citation type="journal article" date="2011" name="MBio">
        <title>Novel metabolic attributes of the genus Cyanothece, comprising a group of unicellular nitrogen-fixing Cyanobacteria.</title>
        <authorList>
            <person name="Bandyopadhyay A."/>
            <person name="Elvitigala T."/>
            <person name="Welsh E."/>
            <person name="Stockel J."/>
            <person name="Liberton M."/>
            <person name="Min H."/>
            <person name="Sherman L.A."/>
            <person name="Pakrasi H.B."/>
        </authorList>
    </citation>
    <scope>NUCLEOTIDE SEQUENCE [LARGE SCALE GENOMIC DNA]</scope>
    <source>
        <strain>PCC 8801 / RF-1</strain>
    </source>
</reference>
<organism>
    <name type="scientific">Rippkaea orientalis (strain PCC 8801 / RF-1)</name>
    <name type="common">Cyanothece sp. (strain PCC 8801)</name>
    <dbReference type="NCBI Taxonomy" id="41431"/>
    <lineage>
        <taxon>Bacteria</taxon>
        <taxon>Bacillati</taxon>
        <taxon>Cyanobacteriota</taxon>
        <taxon>Cyanophyceae</taxon>
        <taxon>Oscillatoriophycideae</taxon>
        <taxon>Chroococcales</taxon>
        <taxon>Aphanothecaceae</taxon>
        <taxon>Rippkaea</taxon>
        <taxon>Rippkaea orientalis</taxon>
    </lineage>
</organism>